<reference key="1">
    <citation type="journal article" date="2006" name="Proc. Natl. Acad. Sci. U.S.A.">
        <title>Genome reduction in Leptospira borgpetersenii reflects limited transmission potential.</title>
        <authorList>
            <person name="Bulach D.M."/>
            <person name="Zuerner R.L."/>
            <person name="Wilson P."/>
            <person name="Seemann T."/>
            <person name="McGrath A."/>
            <person name="Cullen P.A."/>
            <person name="Davis J."/>
            <person name="Johnson M."/>
            <person name="Kuczek E."/>
            <person name="Alt D.P."/>
            <person name="Peterson-Burch B."/>
            <person name="Coppel R.L."/>
            <person name="Rood J.I."/>
            <person name="Davies J.K."/>
            <person name="Adler B."/>
        </authorList>
    </citation>
    <scope>NUCLEOTIDE SEQUENCE [LARGE SCALE GENOMIC DNA]</scope>
    <source>
        <strain>JB197</strain>
    </source>
</reference>
<organism>
    <name type="scientific">Leptospira borgpetersenii serovar Hardjo-bovis (strain JB197)</name>
    <dbReference type="NCBI Taxonomy" id="355277"/>
    <lineage>
        <taxon>Bacteria</taxon>
        <taxon>Pseudomonadati</taxon>
        <taxon>Spirochaetota</taxon>
        <taxon>Spirochaetia</taxon>
        <taxon>Leptospirales</taxon>
        <taxon>Leptospiraceae</taxon>
        <taxon>Leptospira</taxon>
    </lineage>
</organism>
<evidence type="ECO:0000255" key="1">
    <source>
        <dbReference type="HAMAP-Rule" id="MF_01020"/>
    </source>
</evidence>
<name>HIS2_LEPBJ</name>
<sequence>MEFLLQLENILKKRKQDLPDKSYTADLFRGGVDRILKKVGEEAGEVIIAAKNSDKKELTHEAADLLFHLQVLLVEQELSLQDVVEELRKRHS</sequence>
<proteinExistence type="inferred from homology"/>
<dbReference type="EC" id="3.6.1.31" evidence="1"/>
<dbReference type="EMBL" id="CP000350">
    <property type="protein sequence ID" value="ABJ75173.1"/>
    <property type="molecule type" value="Genomic_DNA"/>
</dbReference>
<dbReference type="RefSeq" id="WP_002723023.1">
    <property type="nucleotide sequence ID" value="NC_008510.1"/>
</dbReference>
<dbReference type="SMR" id="Q04V97"/>
<dbReference type="GeneID" id="61172669"/>
<dbReference type="KEGG" id="lbj:LBJ_0473"/>
<dbReference type="HOGENOM" id="CLU_123337_1_2_12"/>
<dbReference type="UniPathway" id="UPA00031">
    <property type="reaction ID" value="UER00007"/>
</dbReference>
<dbReference type="Proteomes" id="UP000000656">
    <property type="component" value="Chromosome 1"/>
</dbReference>
<dbReference type="GO" id="GO:0005737">
    <property type="term" value="C:cytoplasm"/>
    <property type="evidence" value="ECO:0007669"/>
    <property type="project" value="UniProtKB-SubCell"/>
</dbReference>
<dbReference type="GO" id="GO:0005524">
    <property type="term" value="F:ATP binding"/>
    <property type="evidence" value="ECO:0007669"/>
    <property type="project" value="UniProtKB-KW"/>
</dbReference>
<dbReference type="GO" id="GO:0004636">
    <property type="term" value="F:phosphoribosyl-ATP diphosphatase activity"/>
    <property type="evidence" value="ECO:0007669"/>
    <property type="project" value="UniProtKB-UniRule"/>
</dbReference>
<dbReference type="GO" id="GO:0000105">
    <property type="term" value="P:L-histidine biosynthetic process"/>
    <property type="evidence" value="ECO:0007669"/>
    <property type="project" value="UniProtKB-UniRule"/>
</dbReference>
<dbReference type="CDD" id="cd11534">
    <property type="entry name" value="NTP-PPase_HisIE_like"/>
    <property type="match status" value="1"/>
</dbReference>
<dbReference type="FunFam" id="1.10.287.1080:FF:000002">
    <property type="entry name" value="Histidine biosynthesis bifunctional protein HisIE"/>
    <property type="match status" value="1"/>
</dbReference>
<dbReference type="Gene3D" id="1.10.287.1080">
    <property type="entry name" value="MazG-like"/>
    <property type="match status" value="1"/>
</dbReference>
<dbReference type="HAMAP" id="MF_01020">
    <property type="entry name" value="HisE"/>
    <property type="match status" value="1"/>
</dbReference>
<dbReference type="InterPro" id="IPR008179">
    <property type="entry name" value="HisE"/>
</dbReference>
<dbReference type="InterPro" id="IPR021130">
    <property type="entry name" value="PRib-ATP_PPHydrolase-like"/>
</dbReference>
<dbReference type="NCBIfam" id="TIGR03188">
    <property type="entry name" value="histidine_hisI"/>
    <property type="match status" value="1"/>
</dbReference>
<dbReference type="NCBIfam" id="NF001611">
    <property type="entry name" value="PRK00400.1-3"/>
    <property type="match status" value="1"/>
</dbReference>
<dbReference type="PANTHER" id="PTHR42945">
    <property type="entry name" value="HISTIDINE BIOSYNTHESIS BIFUNCTIONAL PROTEIN"/>
    <property type="match status" value="1"/>
</dbReference>
<dbReference type="PANTHER" id="PTHR42945:SF9">
    <property type="entry name" value="HISTIDINE BIOSYNTHESIS BIFUNCTIONAL PROTEIN HISIE"/>
    <property type="match status" value="1"/>
</dbReference>
<dbReference type="Pfam" id="PF01503">
    <property type="entry name" value="PRA-PH"/>
    <property type="match status" value="1"/>
</dbReference>
<dbReference type="SUPFAM" id="SSF101386">
    <property type="entry name" value="all-alpha NTP pyrophosphatases"/>
    <property type="match status" value="1"/>
</dbReference>
<accession>Q04V97</accession>
<protein>
    <recommendedName>
        <fullName evidence="1">Phosphoribosyl-ATP pyrophosphatase</fullName>
        <shortName evidence="1">PRA-PH</shortName>
        <ecNumber evidence="1">3.6.1.31</ecNumber>
    </recommendedName>
</protein>
<keyword id="KW-0028">Amino-acid biosynthesis</keyword>
<keyword id="KW-0067">ATP-binding</keyword>
<keyword id="KW-0963">Cytoplasm</keyword>
<keyword id="KW-0368">Histidine biosynthesis</keyword>
<keyword id="KW-0378">Hydrolase</keyword>
<keyword id="KW-0547">Nucleotide-binding</keyword>
<feature type="chain" id="PRO_1000063342" description="Phosphoribosyl-ATP pyrophosphatase">
    <location>
        <begin position="1"/>
        <end position="92"/>
    </location>
</feature>
<gene>
    <name evidence="1" type="primary">hisE</name>
    <name type="ordered locus">LBJ_0473</name>
</gene>
<comment type="catalytic activity">
    <reaction evidence="1">
        <text>1-(5-phospho-beta-D-ribosyl)-ATP + H2O = 1-(5-phospho-beta-D-ribosyl)-5'-AMP + diphosphate + H(+)</text>
        <dbReference type="Rhea" id="RHEA:22828"/>
        <dbReference type="ChEBI" id="CHEBI:15377"/>
        <dbReference type="ChEBI" id="CHEBI:15378"/>
        <dbReference type="ChEBI" id="CHEBI:33019"/>
        <dbReference type="ChEBI" id="CHEBI:59457"/>
        <dbReference type="ChEBI" id="CHEBI:73183"/>
        <dbReference type="EC" id="3.6.1.31"/>
    </reaction>
</comment>
<comment type="pathway">
    <text evidence="1">Amino-acid biosynthesis; L-histidine biosynthesis; L-histidine from 5-phospho-alpha-D-ribose 1-diphosphate: step 2/9.</text>
</comment>
<comment type="subcellular location">
    <subcellularLocation>
        <location evidence="1">Cytoplasm</location>
    </subcellularLocation>
</comment>
<comment type="similarity">
    <text evidence="1">Belongs to the PRA-PH family.</text>
</comment>